<keyword id="KW-0030">Aminoacyl-tRNA synthetase</keyword>
<keyword id="KW-0067">ATP-binding</keyword>
<keyword id="KW-0963">Cytoplasm</keyword>
<keyword id="KW-0436">Ligase</keyword>
<keyword id="KW-0547">Nucleotide-binding</keyword>
<keyword id="KW-0648">Protein biosynthesis</keyword>
<protein>
    <recommendedName>
        <fullName evidence="1">Glutamate--tRNA ligase</fullName>
        <ecNumber evidence="1">6.1.1.17</ecNumber>
    </recommendedName>
    <alternativeName>
        <fullName evidence="1">Glutamyl-tRNA synthetase</fullName>
        <shortName evidence="1">GluRS</shortName>
    </alternativeName>
</protein>
<proteinExistence type="inferred from homology"/>
<dbReference type="EC" id="6.1.1.17" evidence="1"/>
<dbReference type="EMBL" id="CP000605">
    <property type="protein sequence ID" value="ACD98706.1"/>
    <property type="molecule type" value="Genomic_DNA"/>
</dbReference>
<dbReference type="RefSeq" id="WP_007051591.1">
    <property type="nucleotide sequence ID" value="NZ_AABM02000012.1"/>
</dbReference>
<dbReference type="SMR" id="B3DU87"/>
<dbReference type="GeneID" id="69577410"/>
<dbReference type="KEGG" id="blj:BLD_1261"/>
<dbReference type="HOGENOM" id="CLU_015768_6_1_11"/>
<dbReference type="Proteomes" id="UP000002419">
    <property type="component" value="Chromosome"/>
</dbReference>
<dbReference type="GO" id="GO:0005829">
    <property type="term" value="C:cytosol"/>
    <property type="evidence" value="ECO:0007669"/>
    <property type="project" value="TreeGrafter"/>
</dbReference>
<dbReference type="GO" id="GO:0005524">
    <property type="term" value="F:ATP binding"/>
    <property type="evidence" value="ECO:0007669"/>
    <property type="project" value="UniProtKB-UniRule"/>
</dbReference>
<dbReference type="GO" id="GO:0004818">
    <property type="term" value="F:glutamate-tRNA ligase activity"/>
    <property type="evidence" value="ECO:0007669"/>
    <property type="project" value="UniProtKB-UniRule"/>
</dbReference>
<dbReference type="GO" id="GO:0000049">
    <property type="term" value="F:tRNA binding"/>
    <property type="evidence" value="ECO:0007669"/>
    <property type="project" value="InterPro"/>
</dbReference>
<dbReference type="GO" id="GO:0008270">
    <property type="term" value="F:zinc ion binding"/>
    <property type="evidence" value="ECO:0007669"/>
    <property type="project" value="InterPro"/>
</dbReference>
<dbReference type="GO" id="GO:0006424">
    <property type="term" value="P:glutamyl-tRNA aminoacylation"/>
    <property type="evidence" value="ECO:0007669"/>
    <property type="project" value="UniProtKB-UniRule"/>
</dbReference>
<dbReference type="CDD" id="cd00808">
    <property type="entry name" value="GluRS_core"/>
    <property type="match status" value="1"/>
</dbReference>
<dbReference type="FunFam" id="3.40.50.620:FF:000149">
    <property type="entry name" value="Glutamate--tRNA ligase"/>
    <property type="match status" value="1"/>
</dbReference>
<dbReference type="Gene3D" id="1.10.10.350">
    <property type="match status" value="1"/>
</dbReference>
<dbReference type="Gene3D" id="1.10.8.70">
    <property type="entry name" value="Glutamate-tRNA synthetase, class I, anticodon-binding domain 1"/>
    <property type="match status" value="1"/>
</dbReference>
<dbReference type="Gene3D" id="1.10.1160.10">
    <property type="entry name" value="Glutamyl-trna Synthetase, Domain 2"/>
    <property type="match status" value="1"/>
</dbReference>
<dbReference type="Gene3D" id="3.90.800.10">
    <property type="entry name" value="Glutamyl-tRNA Synthetase, Domain 3"/>
    <property type="match status" value="1"/>
</dbReference>
<dbReference type="Gene3D" id="3.40.50.620">
    <property type="entry name" value="HUPs"/>
    <property type="match status" value="1"/>
</dbReference>
<dbReference type="HAMAP" id="MF_00022">
    <property type="entry name" value="Glu_tRNA_synth_type1"/>
    <property type="match status" value="1"/>
</dbReference>
<dbReference type="InterPro" id="IPR045462">
    <property type="entry name" value="aa-tRNA-synth_I_cd-bd"/>
</dbReference>
<dbReference type="InterPro" id="IPR020751">
    <property type="entry name" value="aa-tRNA-synth_I_codon-bd_sub2"/>
</dbReference>
<dbReference type="InterPro" id="IPR008925">
    <property type="entry name" value="aa_tRNA-synth_I_cd-bd_sf"/>
</dbReference>
<dbReference type="InterPro" id="IPR004527">
    <property type="entry name" value="Glu-tRNA-ligase_bac/mito"/>
</dbReference>
<dbReference type="InterPro" id="IPR020752">
    <property type="entry name" value="Glu-tRNA-synth_I_codon-bd_sub1"/>
</dbReference>
<dbReference type="InterPro" id="IPR000924">
    <property type="entry name" value="Glu/Gln-tRNA-synth"/>
</dbReference>
<dbReference type="InterPro" id="IPR020058">
    <property type="entry name" value="Glu/Gln-tRNA-synth_Ib_cat-dom"/>
</dbReference>
<dbReference type="InterPro" id="IPR020061">
    <property type="entry name" value="Glu_tRNA_lig_a-bdl"/>
</dbReference>
<dbReference type="InterPro" id="IPR049940">
    <property type="entry name" value="GluQ/Sye"/>
</dbReference>
<dbReference type="InterPro" id="IPR033910">
    <property type="entry name" value="GluRS_core"/>
</dbReference>
<dbReference type="InterPro" id="IPR014729">
    <property type="entry name" value="Rossmann-like_a/b/a_fold"/>
</dbReference>
<dbReference type="NCBIfam" id="TIGR00464">
    <property type="entry name" value="gltX_bact"/>
    <property type="match status" value="1"/>
</dbReference>
<dbReference type="PANTHER" id="PTHR43311">
    <property type="entry name" value="GLUTAMATE--TRNA LIGASE"/>
    <property type="match status" value="1"/>
</dbReference>
<dbReference type="PANTHER" id="PTHR43311:SF2">
    <property type="entry name" value="GLUTAMATE--TRNA LIGASE, MITOCHONDRIAL-RELATED"/>
    <property type="match status" value="1"/>
</dbReference>
<dbReference type="Pfam" id="PF19269">
    <property type="entry name" value="Anticodon_2"/>
    <property type="match status" value="1"/>
</dbReference>
<dbReference type="Pfam" id="PF00749">
    <property type="entry name" value="tRNA-synt_1c"/>
    <property type="match status" value="1"/>
</dbReference>
<dbReference type="PRINTS" id="PR00987">
    <property type="entry name" value="TRNASYNTHGLU"/>
</dbReference>
<dbReference type="SUPFAM" id="SSF48163">
    <property type="entry name" value="An anticodon-binding domain of class I aminoacyl-tRNA synthetases"/>
    <property type="match status" value="1"/>
</dbReference>
<dbReference type="SUPFAM" id="SSF52374">
    <property type="entry name" value="Nucleotidylyl transferase"/>
    <property type="match status" value="1"/>
</dbReference>
<gene>
    <name evidence="1" type="primary">gltX</name>
    <name type="ordered locus">BLD_1261</name>
</gene>
<accession>B3DU87</accession>
<name>SYE_BIFLD</name>
<reference key="1">
    <citation type="journal article" date="2008" name="BMC Genomics">
        <title>Comparative genomic analysis of the gut bacterium Bifidobacterium longum reveals loci susceptible to deletion during pure culture growth.</title>
        <authorList>
            <person name="Lee J.H."/>
            <person name="Karamychev V.N."/>
            <person name="Kozyavkin S.A."/>
            <person name="Mills D."/>
            <person name="Pavlov A.R."/>
            <person name="Pavlova N.V."/>
            <person name="Polouchine N.N."/>
            <person name="Richardson P.M."/>
            <person name="Shakhova V.V."/>
            <person name="Slesarev A.I."/>
            <person name="Weimer B."/>
            <person name="O'Sullivan D.J."/>
        </authorList>
    </citation>
    <scope>NUCLEOTIDE SEQUENCE [LARGE SCALE GENOMIC DNA]</scope>
    <source>
        <strain>DJO10A</strain>
    </source>
</reference>
<sequence>MTDAENTKPELPKNVRVRFCPSPTGTPHVGMIRTALFNWAEARATGGTLIFRIEDTDAVRDSEESYNQILESLRWLGIDWDEGIDVGGPHGPYRQSERTAIYKDVAAKLLEAGYAYESFSTPEEIKERNLAAGRPAEFGYDGYDRNLTDEQKAAFRAEGRKPALRIKMPDEDIAFDDLIRGTIEFKAGSVPDYVIVRPNGDPLYTLTNPVDDAMMEVNVVLRGEDLLSSTPRQIVLYRYLMELGIAKEMPLFGHMPYVMGQGNKKLSKRDPESNLFNHRDNGFIREGLLNYLALLGWSIAPDRDVFSMDEMTEKFDVRDVKANPARFDIDKAISINAEHIRMLEPEDFLRRSVPYLHRDGVVSADNWDALTDREREVLTAAAPLVQPRVRLLGEVAGMVGSLLSTEGYLEPADDAKKQLKDSAGEVLDKAIAALEAVDEADWKTDNLHETLNKALVEEGGYKPRLAFGPVRVAMSGRRVSPPLFESMEIVGKPVSLARLKGLREHL</sequence>
<feature type="chain" id="PRO_0000367617" description="Glutamate--tRNA ligase">
    <location>
        <begin position="1"/>
        <end position="506"/>
    </location>
</feature>
<feature type="short sequence motif" description="'HIGH' region" evidence="1">
    <location>
        <begin position="21"/>
        <end position="31"/>
    </location>
</feature>
<feature type="short sequence motif" description="'KMSKS' region" evidence="1">
    <location>
        <begin position="265"/>
        <end position="269"/>
    </location>
</feature>
<feature type="binding site" evidence="1">
    <location>
        <position position="268"/>
    </location>
    <ligand>
        <name>ATP</name>
        <dbReference type="ChEBI" id="CHEBI:30616"/>
    </ligand>
</feature>
<comment type="function">
    <text evidence="1">Catalyzes the attachment of glutamate to tRNA(Glu) in a two-step reaction: glutamate is first activated by ATP to form Glu-AMP and then transferred to the acceptor end of tRNA(Glu).</text>
</comment>
<comment type="catalytic activity">
    <reaction evidence="1">
        <text>tRNA(Glu) + L-glutamate + ATP = L-glutamyl-tRNA(Glu) + AMP + diphosphate</text>
        <dbReference type="Rhea" id="RHEA:23540"/>
        <dbReference type="Rhea" id="RHEA-COMP:9663"/>
        <dbReference type="Rhea" id="RHEA-COMP:9680"/>
        <dbReference type="ChEBI" id="CHEBI:29985"/>
        <dbReference type="ChEBI" id="CHEBI:30616"/>
        <dbReference type="ChEBI" id="CHEBI:33019"/>
        <dbReference type="ChEBI" id="CHEBI:78442"/>
        <dbReference type="ChEBI" id="CHEBI:78520"/>
        <dbReference type="ChEBI" id="CHEBI:456215"/>
        <dbReference type="EC" id="6.1.1.17"/>
    </reaction>
</comment>
<comment type="subunit">
    <text evidence="1">Monomer.</text>
</comment>
<comment type="subcellular location">
    <subcellularLocation>
        <location evidence="1">Cytoplasm</location>
    </subcellularLocation>
</comment>
<comment type="similarity">
    <text evidence="1">Belongs to the class-I aminoacyl-tRNA synthetase family. Glutamate--tRNA ligase type 1 subfamily.</text>
</comment>
<evidence type="ECO:0000255" key="1">
    <source>
        <dbReference type="HAMAP-Rule" id="MF_00022"/>
    </source>
</evidence>
<organism>
    <name type="scientific">Bifidobacterium longum (strain DJO10A)</name>
    <dbReference type="NCBI Taxonomy" id="205913"/>
    <lineage>
        <taxon>Bacteria</taxon>
        <taxon>Bacillati</taxon>
        <taxon>Actinomycetota</taxon>
        <taxon>Actinomycetes</taxon>
        <taxon>Bifidobacteriales</taxon>
        <taxon>Bifidobacteriaceae</taxon>
        <taxon>Bifidobacterium</taxon>
    </lineage>
</organism>